<protein>
    <recommendedName>
        <fullName>Uncharacterized protein YPL108W</fullName>
    </recommendedName>
</protein>
<dbReference type="EMBL" id="U43281">
    <property type="protein sequence ID" value="AAB68192.1"/>
    <property type="molecule type" value="Genomic_DNA"/>
</dbReference>
<dbReference type="EMBL" id="BK006949">
    <property type="protein sequence ID" value="DAA11325.1"/>
    <property type="molecule type" value="Genomic_DNA"/>
</dbReference>
<dbReference type="PIR" id="S61959">
    <property type="entry name" value="S61959"/>
</dbReference>
<dbReference type="RefSeq" id="NP_015217.1">
    <property type="nucleotide sequence ID" value="NM_001183922.1"/>
</dbReference>
<dbReference type="BioGRID" id="36073">
    <property type="interactions" value="25"/>
</dbReference>
<dbReference type="DIP" id="DIP-5256N"/>
<dbReference type="FunCoup" id="Q02872">
    <property type="interactions" value="45"/>
</dbReference>
<dbReference type="IntAct" id="Q02872">
    <property type="interactions" value="3"/>
</dbReference>
<dbReference type="STRING" id="4932.YPL108W"/>
<dbReference type="iPTMnet" id="Q02872"/>
<dbReference type="PaxDb" id="4932-YPL108W"/>
<dbReference type="PeptideAtlas" id="Q02872"/>
<dbReference type="EnsemblFungi" id="YPL108W_mRNA">
    <property type="protein sequence ID" value="YPL108W"/>
    <property type="gene ID" value="YPL108W"/>
</dbReference>
<dbReference type="GeneID" id="855996"/>
<dbReference type="KEGG" id="sce:YPL108W"/>
<dbReference type="AGR" id="SGD:S000006029"/>
<dbReference type="SGD" id="S000006029">
    <property type="gene designation" value="YPL108W"/>
</dbReference>
<dbReference type="VEuPathDB" id="FungiDB:YPL108W"/>
<dbReference type="eggNOG" id="ENOG502S12S">
    <property type="taxonomic scope" value="Eukaryota"/>
</dbReference>
<dbReference type="HOGENOM" id="CLU_125620_0_0_1"/>
<dbReference type="InParanoid" id="Q02872"/>
<dbReference type="OMA" id="EYMIERC"/>
<dbReference type="OrthoDB" id="4082971at2759"/>
<dbReference type="BioCyc" id="YEAST:G3O-34010-MONOMER"/>
<dbReference type="BioGRID-ORCS" id="855996">
    <property type="hits" value="3 hits in 10 CRISPR screens"/>
</dbReference>
<dbReference type="PRO" id="PR:Q02872"/>
<dbReference type="Proteomes" id="UP000002311">
    <property type="component" value="Chromosome XVI"/>
</dbReference>
<dbReference type="RNAct" id="Q02872">
    <property type="molecule type" value="protein"/>
</dbReference>
<dbReference type="GO" id="GO:0005737">
    <property type="term" value="C:cytoplasm"/>
    <property type="evidence" value="ECO:0007005"/>
    <property type="project" value="SGD"/>
</dbReference>
<reference key="1">
    <citation type="journal article" date="1997" name="Nature">
        <title>The nucleotide sequence of Saccharomyces cerevisiae chromosome XVI.</title>
        <authorList>
            <person name="Bussey H."/>
            <person name="Storms R.K."/>
            <person name="Ahmed A."/>
            <person name="Albermann K."/>
            <person name="Allen E."/>
            <person name="Ansorge W."/>
            <person name="Araujo R."/>
            <person name="Aparicio A."/>
            <person name="Barrell B.G."/>
            <person name="Badcock K."/>
            <person name="Benes V."/>
            <person name="Botstein D."/>
            <person name="Bowman S."/>
            <person name="Brueckner M."/>
            <person name="Carpenter J."/>
            <person name="Cherry J.M."/>
            <person name="Chung E."/>
            <person name="Churcher C.M."/>
            <person name="Coster F."/>
            <person name="Davis K."/>
            <person name="Davis R.W."/>
            <person name="Dietrich F.S."/>
            <person name="Delius H."/>
            <person name="DiPaolo T."/>
            <person name="Dubois E."/>
            <person name="Duesterhoeft A."/>
            <person name="Duncan M."/>
            <person name="Floeth M."/>
            <person name="Fortin N."/>
            <person name="Friesen J.D."/>
            <person name="Fritz C."/>
            <person name="Goffeau A."/>
            <person name="Hall J."/>
            <person name="Hebling U."/>
            <person name="Heumann K."/>
            <person name="Hilbert H."/>
            <person name="Hillier L.W."/>
            <person name="Hunicke-Smith S."/>
            <person name="Hyman R.W."/>
            <person name="Johnston M."/>
            <person name="Kalman S."/>
            <person name="Kleine K."/>
            <person name="Komp C."/>
            <person name="Kurdi O."/>
            <person name="Lashkari D."/>
            <person name="Lew H."/>
            <person name="Lin A."/>
            <person name="Lin D."/>
            <person name="Louis E.J."/>
            <person name="Marathe R."/>
            <person name="Messenguy F."/>
            <person name="Mewes H.-W."/>
            <person name="Mirtipati S."/>
            <person name="Moestl D."/>
            <person name="Mueller-Auer S."/>
            <person name="Namath A."/>
            <person name="Nentwich U."/>
            <person name="Oefner P."/>
            <person name="Pearson D."/>
            <person name="Petel F.X."/>
            <person name="Pohl T.M."/>
            <person name="Purnelle B."/>
            <person name="Rajandream M.A."/>
            <person name="Rechmann S."/>
            <person name="Rieger M."/>
            <person name="Riles L."/>
            <person name="Roberts D."/>
            <person name="Schaefer M."/>
            <person name="Scharfe M."/>
            <person name="Scherens B."/>
            <person name="Schramm S."/>
            <person name="Schroeder M."/>
            <person name="Sdicu A.-M."/>
            <person name="Tettelin H."/>
            <person name="Urrestarazu L.A."/>
            <person name="Ushinsky S."/>
            <person name="Vierendeels F."/>
            <person name="Vissers S."/>
            <person name="Voss H."/>
            <person name="Walsh S.V."/>
            <person name="Wambutt R."/>
            <person name="Wang Y."/>
            <person name="Wedler E."/>
            <person name="Wedler H."/>
            <person name="Winnett E."/>
            <person name="Zhong W.-W."/>
            <person name="Zollner A."/>
            <person name="Vo D.H."/>
            <person name="Hani J."/>
        </authorList>
    </citation>
    <scope>NUCLEOTIDE SEQUENCE [LARGE SCALE GENOMIC DNA]</scope>
    <source>
        <strain>ATCC 204508 / S288c</strain>
    </source>
</reference>
<reference key="2">
    <citation type="journal article" date="2014" name="G3 (Bethesda)">
        <title>The reference genome sequence of Saccharomyces cerevisiae: Then and now.</title>
        <authorList>
            <person name="Engel S.R."/>
            <person name="Dietrich F.S."/>
            <person name="Fisk D.G."/>
            <person name="Binkley G."/>
            <person name="Balakrishnan R."/>
            <person name="Costanzo M.C."/>
            <person name="Dwight S.S."/>
            <person name="Hitz B.C."/>
            <person name="Karra K."/>
            <person name="Nash R.S."/>
            <person name="Weng S."/>
            <person name="Wong E.D."/>
            <person name="Lloyd P."/>
            <person name="Skrzypek M.S."/>
            <person name="Miyasato S.R."/>
            <person name="Simison M."/>
            <person name="Cherry J.M."/>
        </authorList>
    </citation>
    <scope>GENOME REANNOTATION</scope>
    <source>
        <strain>ATCC 204508 / S288c</strain>
    </source>
</reference>
<reference key="3">
    <citation type="journal article" date="2003" name="Nature">
        <title>Global analysis of protein localization in budding yeast.</title>
        <authorList>
            <person name="Huh W.-K."/>
            <person name="Falvo J.V."/>
            <person name="Gerke L.C."/>
            <person name="Carroll A.S."/>
            <person name="Howson R.W."/>
            <person name="Weissman J.S."/>
            <person name="O'Shea E.K."/>
        </authorList>
    </citation>
    <scope>SUBCELLULAR LOCATION [LARGE SCALE ANALYSIS]</scope>
</reference>
<sequence length="168" mass="19819">MKEASDREEAPKMVEKNYSTGFRKAHGEKDQSVTKPISLDGRTGEVIVRKSTGKTKIRKGQTEEEYTQQLQHYFEVEQGPVRTKVGWMDEVDPLVEIREGKYDISNKHQRQVLSGFCHRLFYQCKYKECLDLSTYFLGLFEPFNVKNKMKRELEELEYMIERCRGHVL</sequence>
<comment type="interaction">
    <interactant intactId="EBI-38045">
        <id>Q02872</id>
    </interactant>
    <interactant intactId="EBI-2343661">
        <id>Q06063</id>
        <label>DUS4</label>
    </interactant>
    <organismsDiffer>false</organismsDiffer>
    <experiments>2</experiments>
</comment>
<comment type="subcellular location">
    <subcellularLocation>
        <location evidence="2">Cytoplasm</location>
    </subcellularLocation>
</comment>
<accession>Q02872</accession>
<accession>D6W3Q9</accession>
<name>YP108_YEAST</name>
<feature type="chain" id="PRO_0000238647" description="Uncharacterized protein YPL108W">
    <location>
        <begin position="1"/>
        <end position="168"/>
    </location>
</feature>
<feature type="region of interest" description="Disordered" evidence="1">
    <location>
        <begin position="1"/>
        <end position="36"/>
    </location>
</feature>
<feature type="compositionally biased region" description="Basic and acidic residues" evidence="1">
    <location>
        <begin position="1"/>
        <end position="15"/>
    </location>
</feature>
<evidence type="ECO:0000256" key="1">
    <source>
        <dbReference type="SAM" id="MobiDB-lite"/>
    </source>
</evidence>
<evidence type="ECO:0000269" key="2">
    <source>
    </source>
</evidence>
<gene>
    <name type="ordered locus">YPL108W</name>
</gene>
<keyword id="KW-0963">Cytoplasm</keyword>
<keyword id="KW-1185">Reference proteome</keyword>
<organism>
    <name type="scientific">Saccharomyces cerevisiae (strain ATCC 204508 / S288c)</name>
    <name type="common">Baker's yeast</name>
    <dbReference type="NCBI Taxonomy" id="559292"/>
    <lineage>
        <taxon>Eukaryota</taxon>
        <taxon>Fungi</taxon>
        <taxon>Dikarya</taxon>
        <taxon>Ascomycota</taxon>
        <taxon>Saccharomycotina</taxon>
        <taxon>Saccharomycetes</taxon>
        <taxon>Saccharomycetales</taxon>
        <taxon>Saccharomycetaceae</taxon>
        <taxon>Saccharomyces</taxon>
    </lineage>
</organism>
<proteinExistence type="evidence at protein level"/>